<accession>P9WQA8</accession>
<accession>L0TFK3</accession>
<accession>P0A4X2</accession>
<accession>Q50705</accession>
<reference key="1">
    <citation type="journal article" date="2002" name="J. Bacteriol.">
        <title>Whole-genome comparison of Mycobacterium tuberculosis clinical and laboratory strains.</title>
        <authorList>
            <person name="Fleischmann R.D."/>
            <person name="Alland D."/>
            <person name="Eisen J.A."/>
            <person name="Carpenter L."/>
            <person name="White O."/>
            <person name="Peterson J.D."/>
            <person name="DeBoy R.T."/>
            <person name="Dodson R.J."/>
            <person name="Gwinn M.L."/>
            <person name="Haft D.H."/>
            <person name="Hickey E.K."/>
            <person name="Kolonay J.F."/>
            <person name="Nelson W.C."/>
            <person name="Umayam L.A."/>
            <person name="Ermolaeva M.D."/>
            <person name="Salzberg S.L."/>
            <person name="Delcher A."/>
            <person name="Utterback T.R."/>
            <person name="Weidman J.F."/>
            <person name="Khouri H.M."/>
            <person name="Gill J."/>
            <person name="Mikula A."/>
            <person name="Bishai W."/>
            <person name="Jacobs W.R. Jr."/>
            <person name="Venter J.C."/>
            <person name="Fraser C.M."/>
        </authorList>
    </citation>
    <scope>NUCLEOTIDE SEQUENCE [LARGE SCALE GENOMIC DNA]</scope>
    <source>
        <strain>CDC 1551 / Oshkosh</strain>
    </source>
</reference>
<proteinExistence type="inferred from homology"/>
<gene>
    <name type="primary">alr</name>
    <name type="ordered locus">MT3532</name>
</gene>
<organism>
    <name type="scientific">Mycobacterium tuberculosis (strain CDC 1551 / Oshkosh)</name>
    <dbReference type="NCBI Taxonomy" id="83331"/>
    <lineage>
        <taxon>Bacteria</taxon>
        <taxon>Bacillati</taxon>
        <taxon>Actinomycetota</taxon>
        <taxon>Actinomycetes</taxon>
        <taxon>Mycobacteriales</taxon>
        <taxon>Mycobacteriaceae</taxon>
        <taxon>Mycobacterium</taxon>
        <taxon>Mycobacterium tuberculosis complex</taxon>
    </lineage>
</organism>
<comment type="function">
    <text evidence="1">Catalyzes the interconversion of L-alanine and D-alanine.</text>
</comment>
<comment type="catalytic activity">
    <reaction evidence="3">
        <text>L-alanine = D-alanine</text>
        <dbReference type="Rhea" id="RHEA:20249"/>
        <dbReference type="ChEBI" id="CHEBI:57416"/>
        <dbReference type="ChEBI" id="CHEBI:57972"/>
        <dbReference type="EC" id="5.1.1.1"/>
    </reaction>
</comment>
<comment type="cofactor">
    <cofactor evidence="3">
        <name>pyridoxal 5'-phosphate</name>
        <dbReference type="ChEBI" id="CHEBI:597326"/>
    </cofactor>
</comment>
<comment type="pathway">
    <text evidence="3">Amino-acid biosynthesis; D-alanine biosynthesis; D-alanine from L-alanine: step 1/1.</text>
</comment>
<comment type="subunit">
    <text evidence="1">Homodimer.</text>
</comment>
<comment type="similarity">
    <text evidence="3">Belongs to the alanine racemase family.</text>
</comment>
<comment type="sequence caution" evidence="2">
    <conflict type="erroneous initiation">
        <sequence resource="EMBL-CDS" id="AAK47870"/>
    </conflict>
    <text>Extended N-terminus.</text>
</comment>
<keyword id="KW-0413">Isomerase</keyword>
<keyword id="KW-0663">Pyridoxal phosphate</keyword>
<keyword id="KW-1185">Reference proteome</keyword>
<evidence type="ECO:0000250" key="1"/>
<evidence type="ECO:0000250" key="2">
    <source>
        <dbReference type="UniProtKB" id="P9WQA9"/>
    </source>
</evidence>
<evidence type="ECO:0000255" key="3">
    <source>
        <dbReference type="HAMAP-Rule" id="MF_01201"/>
    </source>
</evidence>
<dbReference type="EC" id="5.1.1.1" evidence="3"/>
<dbReference type="EMBL" id="AE000516">
    <property type="protein sequence ID" value="AAK47870.1"/>
    <property type="status" value="ALT_INIT"/>
    <property type="molecule type" value="Genomic_DNA"/>
</dbReference>
<dbReference type="PIR" id="D70738">
    <property type="entry name" value="D70738"/>
</dbReference>
<dbReference type="SMR" id="P9WQA8"/>
<dbReference type="DrugCentral" id="P9WQA8"/>
<dbReference type="KEGG" id="mtc:MT3532"/>
<dbReference type="HOGENOM" id="CLU_028393_0_0_11"/>
<dbReference type="UniPathway" id="UPA00042">
    <property type="reaction ID" value="UER00497"/>
</dbReference>
<dbReference type="Proteomes" id="UP000001020">
    <property type="component" value="Chromosome"/>
</dbReference>
<dbReference type="GO" id="GO:0005829">
    <property type="term" value="C:cytosol"/>
    <property type="evidence" value="ECO:0007669"/>
    <property type="project" value="TreeGrafter"/>
</dbReference>
<dbReference type="GO" id="GO:0008784">
    <property type="term" value="F:alanine racemase activity"/>
    <property type="evidence" value="ECO:0007669"/>
    <property type="project" value="UniProtKB-UniRule"/>
</dbReference>
<dbReference type="GO" id="GO:0030170">
    <property type="term" value="F:pyridoxal phosphate binding"/>
    <property type="evidence" value="ECO:0007669"/>
    <property type="project" value="UniProtKB-UniRule"/>
</dbReference>
<dbReference type="GO" id="GO:0030632">
    <property type="term" value="P:D-alanine biosynthetic process"/>
    <property type="evidence" value="ECO:0007669"/>
    <property type="project" value="UniProtKB-UniRule"/>
</dbReference>
<dbReference type="GO" id="GO:0009252">
    <property type="term" value="P:peptidoglycan biosynthetic process"/>
    <property type="evidence" value="ECO:0007669"/>
    <property type="project" value="TreeGrafter"/>
</dbReference>
<dbReference type="CDD" id="cd00430">
    <property type="entry name" value="PLPDE_III_AR"/>
    <property type="match status" value="1"/>
</dbReference>
<dbReference type="FunFam" id="2.40.37.10:FF:000015">
    <property type="entry name" value="Alanine racemase"/>
    <property type="match status" value="1"/>
</dbReference>
<dbReference type="FunFam" id="3.20.20.10:FF:000002">
    <property type="entry name" value="Alanine racemase"/>
    <property type="match status" value="1"/>
</dbReference>
<dbReference type="Gene3D" id="3.20.20.10">
    <property type="entry name" value="Alanine racemase"/>
    <property type="match status" value="1"/>
</dbReference>
<dbReference type="Gene3D" id="2.40.37.10">
    <property type="entry name" value="Lyase, Ornithine Decarboxylase, Chain A, domain 1"/>
    <property type="match status" value="1"/>
</dbReference>
<dbReference type="HAMAP" id="MF_01201">
    <property type="entry name" value="Ala_racemase"/>
    <property type="match status" value="1"/>
</dbReference>
<dbReference type="InterPro" id="IPR000821">
    <property type="entry name" value="Ala_racemase"/>
</dbReference>
<dbReference type="InterPro" id="IPR009006">
    <property type="entry name" value="Ala_racemase/Decarboxylase_C"/>
</dbReference>
<dbReference type="InterPro" id="IPR011079">
    <property type="entry name" value="Ala_racemase_C"/>
</dbReference>
<dbReference type="InterPro" id="IPR001608">
    <property type="entry name" value="Ala_racemase_N"/>
</dbReference>
<dbReference type="InterPro" id="IPR020622">
    <property type="entry name" value="Ala_racemase_pyridoxalP-BS"/>
</dbReference>
<dbReference type="InterPro" id="IPR029066">
    <property type="entry name" value="PLP-binding_barrel"/>
</dbReference>
<dbReference type="NCBIfam" id="TIGR00492">
    <property type="entry name" value="alr"/>
    <property type="match status" value="1"/>
</dbReference>
<dbReference type="PANTHER" id="PTHR30511">
    <property type="entry name" value="ALANINE RACEMASE"/>
    <property type="match status" value="1"/>
</dbReference>
<dbReference type="PANTHER" id="PTHR30511:SF0">
    <property type="entry name" value="ALANINE RACEMASE, CATABOLIC-RELATED"/>
    <property type="match status" value="1"/>
</dbReference>
<dbReference type="Pfam" id="PF00842">
    <property type="entry name" value="Ala_racemase_C"/>
    <property type="match status" value="1"/>
</dbReference>
<dbReference type="Pfam" id="PF01168">
    <property type="entry name" value="Ala_racemase_N"/>
    <property type="match status" value="1"/>
</dbReference>
<dbReference type="PRINTS" id="PR00992">
    <property type="entry name" value="ALARACEMASE"/>
</dbReference>
<dbReference type="SMART" id="SM01005">
    <property type="entry name" value="Ala_racemase_C"/>
    <property type="match status" value="1"/>
</dbReference>
<dbReference type="SUPFAM" id="SSF50621">
    <property type="entry name" value="Alanine racemase C-terminal domain-like"/>
    <property type="match status" value="1"/>
</dbReference>
<dbReference type="SUPFAM" id="SSF51419">
    <property type="entry name" value="PLP-binding barrel"/>
    <property type="match status" value="1"/>
</dbReference>
<dbReference type="PROSITE" id="PS00395">
    <property type="entry name" value="ALANINE_RACEMASE"/>
    <property type="match status" value="1"/>
</dbReference>
<name>ALR_MYCTO</name>
<feature type="chain" id="PRO_0000426808" description="Alanine racemase">
    <location>
        <begin position="1"/>
        <end position="384"/>
    </location>
</feature>
<feature type="active site" description="Proton acceptor; specific for D-alanine" evidence="3">
    <location>
        <position position="42"/>
    </location>
</feature>
<feature type="active site" description="Proton acceptor; specific for L-alanine" evidence="3">
    <location>
        <position position="271"/>
    </location>
</feature>
<feature type="binding site" evidence="3">
    <location>
        <position position="140"/>
    </location>
    <ligand>
        <name>substrate</name>
    </ligand>
</feature>
<feature type="binding site" evidence="3">
    <location>
        <position position="319"/>
    </location>
    <ligand>
        <name>substrate</name>
    </ligand>
</feature>
<feature type="modified residue" description="N6-(pyridoxal phosphate)lysine" evidence="3">
    <location>
        <position position="42"/>
    </location>
</feature>
<sequence length="384" mass="40724">MTPISQTPGLLAEAMVDLGAIEHNVRVLREHAGHAQLMAVVKADGYGHGATRVAQTALGAGAAELGVATVDEALALRADGITAPVLAWLHPPGIDFGPALLADVQVAVSSLRQLDELLHAVRRTGRTATVTVKVDTGLNRNGVGPAQFPAMLTALRQAMAEDAVRLRGLMSHMVYADKPDDSINDVQAQRFTAFLAQAREQGVRFEVAHLSNSSATMARPDLTFDLVRPGIAVYGLSPVPALGDMGLVPAMTVKCAVALVKSIRAGEGVSYGHTWIAPRDTNLALLPIGYADGVFRSLGGRLEVLINGRRCPGVGRICMDQFMVDLGPGPLDVAEGDEAILFGPGIRGEPTAQDWADLVGTIHYEVVTSPRGRITRTYREAENR</sequence>
<protein>
    <recommendedName>
        <fullName evidence="3">Alanine racemase</fullName>
        <ecNumber evidence="3">5.1.1.1</ecNumber>
    </recommendedName>
</protein>